<accession>Q81V87</accession>
<accession>Q6I3H4</accession>
<accession>Q6KX87</accession>
<sequence length="59" mass="6545">MDVKRVKQILSSSSRIDVTYEGVPVWIESCDEQSGVAQVYDVSNPGESVHVHVNALEEK</sequence>
<proteinExistence type="inferred from homology"/>
<comment type="subcellular location">
    <subcellularLocation>
        <location evidence="1">Spore core</location>
    </subcellularLocation>
</comment>
<comment type="induction">
    <text evidence="1">Expressed only in the forespore compartment of sporulating cells.</text>
</comment>
<comment type="similarity">
    <text evidence="2">Belongs to the SspH family.</text>
</comment>
<comment type="sequence caution" evidence="2">
    <conflict type="erroneous initiation">
        <sequence resource="EMBL-CDS" id="AAT52907"/>
    </conflict>
</comment>
<dbReference type="EMBL" id="AE016879">
    <property type="protein sequence ID" value="AAP24630.1"/>
    <property type="molecule type" value="Genomic_DNA"/>
</dbReference>
<dbReference type="EMBL" id="AE017334">
    <property type="protein sequence ID" value="AAT29714.2"/>
    <property type="molecule type" value="Genomic_DNA"/>
</dbReference>
<dbReference type="EMBL" id="AE017225">
    <property type="protein sequence ID" value="AAT52907.1"/>
    <property type="status" value="ALT_INIT"/>
    <property type="molecule type" value="Genomic_DNA"/>
</dbReference>
<dbReference type="RefSeq" id="NP_843144.3">
    <property type="nucleotide sequence ID" value="NC_003997.3"/>
</dbReference>
<dbReference type="RefSeq" id="WP_000382681.1">
    <property type="nucleotide sequence ID" value="NZ_WXXJ01000017.1"/>
</dbReference>
<dbReference type="STRING" id="261594.GBAA_0613"/>
<dbReference type="DNASU" id="1087976"/>
<dbReference type="GeneID" id="45020674"/>
<dbReference type="KEGG" id="ban:BA_0613"/>
<dbReference type="KEGG" id="bar:GBAA_0613"/>
<dbReference type="KEGG" id="bat:BAS0579"/>
<dbReference type="PATRIC" id="fig|198094.11.peg.611"/>
<dbReference type="eggNOG" id="ENOG50339TA">
    <property type="taxonomic scope" value="Bacteria"/>
</dbReference>
<dbReference type="HOGENOM" id="CLU_191960_0_0_9"/>
<dbReference type="OMA" id="WIEHVDE"/>
<dbReference type="OrthoDB" id="2721675at2"/>
<dbReference type="Proteomes" id="UP000000427">
    <property type="component" value="Chromosome"/>
</dbReference>
<dbReference type="Proteomes" id="UP000000594">
    <property type="component" value="Chromosome"/>
</dbReference>
<dbReference type="GO" id="GO:0042601">
    <property type="term" value="C:endospore-forming forespore"/>
    <property type="evidence" value="ECO:0007669"/>
    <property type="project" value="InterPro"/>
</dbReference>
<dbReference type="GO" id="GO:0030436">
    <property type="term" value="P:asexual sporulation"/>
    <property type="evidence" value="ECO:0007669"/>
    <property type="project" value="UniProtKB-UniRule"/>
</dbReference>
<dbReference type="GO" id="GO:0030435">
    <property type="term" value="P:sporulation resulting in formation of a cellular spore"/>
    <property type="evidence" value="ECO:0007669"/>
    <property type="project" value="UniProtKB-KW"/>
</dbReference>
<dbReference type="HAMAP" id="MF_00667">
    <property type="entry name" value="SspH"/>
    <property type="match status" value="1"/>
</dbReference>
<dbReference type="InterPro" id="IPR012610">
    <property type="entry name" value="SASP_SspH"/>
</dbReference>
<dbReference type="NCBIfam" id="NF002451">
    <property type="entry name" value="PRK01625.1"/>
    <property type="match status" value="1"/>
</dbReference>
<dbReference type="NCBIfam" id="TIGR02861">
    <property type="entry name" value="SASP_H"/>
    <property type="match status" value="1"/>
</dbReference>
<dbReference type="Pfam" id="PF08141">
    <property type="entry name" value="SspH"/>
    <property type="match status" value="1"/>
</dbReference>
<organism>
    <name type="scientific">Bacillus anthracis</name>
    <dbReference type="NCBI Taxonomy" id="1392"/>
    <lineage>
        <taxon>Bacteria</taxon>
        <taxon>Bacillati</taxon>
        <taxon>Bacillota</taxon>
        <taxon>Bacilli</taxon>
        <taxon>Bacillales</taxon>
        <taxon>Bacillaceae</taxon>
        <taxon>Bacillus</taxon>
        <taxon>Bacillus cereus group</taxon>
    </lineage>
</organism>
<evidence type="ECO:0000250" key="1"/>
<evidence type="ECO:0000305" key="2"/>
<gene>
    <name type="primary">sspH1</name>
    <name type="ordered locus">BA_0613</name>
    <name type="ordered locus">GBAA_0613</name>
    <name type="ordered locus">BAS0579</name>
</gene>
<feature type="chain" id="PRO_0000162310" description="Small, acid-soluble spore protein H 1">
    <location>
        <begin position="1"/>
        <end position="59"/>
    </location>
</feature>
<protein>
    <recommendedName>
        <fullName>Small, acid-soluble spore protein H 1</fullName>
        <shortName>SASP H 1</shortName>
    </recommendedName>
</protein>
<keyword id="KW-1185">Reference proteome</keyword>
<keyword id="KW-0749">Sporulation</keyword>
<reference key="1">
    <citation type="journal article" date="2003" name="Nature">
        <title>The genome sequence of Bacillus anthracis Ames and comparison to closely related bacteria.</title>
        <authorList>
            <person name="Read T.D."/>
            <person name="Peterson S.N."/>
            <person name="Tourasse N.J."/>
            <person name="Baillie L.W."/>
            <person name="Paulsen I.T."/>
            <person name="Nelson K.E."/>
            <person name="Tettelin H."/>
            <person name="Fouts D.E."/>
            <person name="Eisen J.A."/>
            <person name="Gill S.R."/>
            <person name="Holtzapple E.K."/>
            <person name="Okstad O.A."/>
            <person name="Helgason E."/>
            <person name="Rilstone J."/>
            <person name="Wu M."/>
            <person name="Kolonay J.F."/>
            <person name="Beanan M.J."/>
            <person name="Dodson R.J."/>
            <person name="Brinkac L.M."/>
            <person name="Gwinn M.L."/>
            <person name="DeBoy R.T."/>
            <person name="Madpu R."/>
            <person name="Daugherty S.C."/>
            <person name="Durkin A.S."/>
            <person name="Haft D.H."/>
            <person name="Nelson W.C."/>
            <person name="Peterson J.D."/>
            <person name="Pop M."/>
            <person name="Khouri H.M."/>
            <person name="Radune D."/>
            <person name="Benton J.L."/>
            <person name="Mahamoud Y."/>
            <person name="Jiang L."/>
            <person name="Hance I.R."/>
            <person name="Weidman J.F."/>
            <person name="Berry K.J."/>
            <person name="Plaut R.D."/>
            <person name="Wolf A.M."/>
            <person name="Watkins K.L."/>
            <person name="Nierman W.C."/>
            <person name="Hazen A."/>
            <person name="Cline R.T."/>
            <person name="Redmond C."/>
            <person name="Thwaite J.E."/>
            <person name="White O."/>
            <person name="Salzberg S.L."/>
            <person name="Thomason B."/>
            <person name="Friedlander A.M."/>
            <person name="Koehler T.M."/>
            <person name="Hanna P.C."/>
            <person name="Kolstoe A.-B."/>
            <person name="Fraser C.M."/>
        </authorList>
    </citation>
    <scope>NUCLEOTIDE SEQUENCE [LARGE SCALE GENOMIC DNA]</scope>
    <source>
        <strain>Ames / isolate Porton</strain>
    </source>
</reference>
<reference key="2">
    <citation type="journal article" date="2009" name="J. Bacteriol.">
        <title>The complete genome sequence of Bacillus anthracis Ames 'Ancestor'.</title>
        <authorList>
            <person name="Ravel J."/>
            <person name="Jiang L."/>
            <person name="Stanley S.T."/>
            <person name="Wilson M.R."/>
            <person name="Decker R.S."/>
            <person name="Read T.D."/>
            <person name="Worsham P."/>
            <person name="Keim P.S."/>
            <person name="Salzberg S.L."/>
            <person name="Fraser-Liggett C.M."/>
            <person name="Rasko D.A."/>
        </authorList>
    </citation>
    <scope>NUCLEOTIDE SEQUENCE [LARGE SCALE GENOMIC DNA]</scope>
    <source>
        <strain>Ames ancestor</strain>
    </source>
</reference>
<reference key="3">
    <citation type="submission" date="2004-01" db="EMBL/GenBank/DDBJ databases">
        <title>Complete genome sequence of Bacillus anthracis Sterne.</title>
        <authorList>
            <person name="Brettin T.S."/>
            <person name="Bruce D."/>
            <person name="Challacombe J.F."/>
            <person name="Gilna P."/>
            <person name="Han C."/>
            <person name="Hill K."/>
            <person name="Hitchcock P."/>
            <person name="Jackson P."/>
            <person name="Keim P."/>
            <person name="Longmire J."/>
            <person name="Lucas S."/>
            <person name="Okinaka R."/>
            <person name="Richardson P."/>
            <person name="Rubin E."/>
            <person name="Tice H."/>
        </authorList>
    </citation>
    <scope>NUCLEOTIDE SEQUENCE [LARGE SCALE GENOMIC DNA]</scope>
    <source>
        <strain>Sterne</strain>
    </source>
</reference>
<name>SSPH1_BACAN</name>